<proteinExistence type="inferred from homology"/>
<gene>
    <name evidence="1" type="primary">purM</name>
    <name type="ordered locus">Bind_1293</name>
</gene>
<dbReference type="EC" id="6.3.3.1" evidence="1"/>
<dbReference type="EMBL" id="CP001016">
    <property type="protein sequence ID" value="ACB94934.1"/>
    <property type="molecule type" value="Genomic_DNA"/>
</dbReference>
<dbReference type="RefSeq" id="WP_012384291.1">
    <property type="nucleotide sequence ID" value="NC_010581.1"/>
</dbReference>
<dbReference type="SMR" id="B2IJR2"/>
<dbReference type="STRING" id="395963.Bind_1293"/>
<dbReference type="KEGG" id="bid:Bind_1293"/>
<dbReference type="eggNOG" id="COG0150">
    <property type="taxonomic scope" value="Bacteria"/>
</dbReference>
<dbReference type="HOGENOM" id="CLU_047116_0_0_5"/>
<dbReference type="OrthoDB" id="9777881at2"/>
<dbReference type="UniPathway" id="UPA00074">
    <property type="reaction ID" value="UER00129"/>
</dbReference>
<dbReference type="Proteomes" id="UP000001695">
    <property type="component" value="Chromosome"/>
</dbReference>
<dbReference type="GO" id="GO:0005829">
    <property type="term" value="C:cytosol"/>
    <property type="evidence" value="ECO:0007669"/>
    <property type="project" value="TreeGrafter"/>
</dbReference>
<dbReference type="GO" id="GO:0005524">
    <property type="term" value="F:ATP binding"/>
    <property type="evidence" value="ECO:0007669"/>
    <property type="project" value="UniProtKB-KW"/>
</dbReference>
<dbReference type="GO" id="GO:0004637">
    <property type="term" value="F:phosphoribosylamine-glycine ligase activity"/>
    <property type="evidence" value="ECO:0007669"/>
    <property type="project" value="TreeGrafter"/>
</dbReference>
<dbReference type="GO" id="GO:0004641">
    <property type="term" value="F:phosphoribosylformylglycinamidine cyclo-ligase activity"/>
    <property type="evidence" value="ECO:0007669"/>
    <property type="project" value="UniProtKB-UniRule"/>
</dbReference>
<dbReference type="GO" id="GO:0006189">
    <property type="term" value="P:'de novo' IMP biosynthetic process"/>
    <property type="evidence" value="ECO:0007669"/>
    <property type="project" value="UniProtKB-UniRule"/>
</dbReference>
<dbReference type="GO" id="GO:0046084">
    <property type="term" value="P:adenine biosynthetic process"/>
    <property type="evidence" value="ECO:0007669"/>
    <property type="project" value="TreeGrafter"/>
</dbReference>
<dbReference type="CDD" id="cd02196">
    <property type="entry name" value="PurM"/>
    <property type="match status" value="1"/>
</dbReference>
<dbReference type="FunFam" id="3.30.1330.10:FF:000001">
    <property type="entry name" value="Phosphoribosylformylglycinamidine cyclo-ligase"/>
    <property type="match status" value="1"/>
</dbReference>
<dbReference type="FunFam" id="3.90.650.10:FF:000011">
    <property type="entry name" value="Phosphoribosylformylglycinamidine cyclo-ligase"/>
    <property type="match status" value="1"/>
</dbReference>
<dbReference type="Gene3D" id="3.90.650.10">
    <property type="entry name" value="PurM-like C-terminal domain"/>
    <property type="match status" value="1"/>
</dbReference>
<dbReference type="Gene3D" id="3.30.1330.10">
    <property type="entry name" value="PurM-like, N-terminal domain"/>
    <property type="match status" value="1"/>
</dbReference>
<dbReference type="HAMAP" id="MF_00741">
    <property type="entry name" value="AIRS"/>
    <property type="match status" value="1"/>
</dbReference>
<dbReference type="InterPro" id="IPR010918">
    <property type="entry name" value="PurM-like_C_dom"/>
</dbReference>
<dbReference type="InterPro" id="IPR036676">
    <property type="entry name" value="PurM-like_C_sf"/>
</dbReference>
<dbReference type="InterPro" id="IPR016188">
    <property type="entry name" value="PurM-like_N"/>
</dbReference>
<dbReference type="InterPro" id="IPR036921">
    <property type="entry name" value="PurM-like_N_sf"/>
</dbReference>
<dbReference type="InterPro" id="IPR004733">
    <property type="entry name" value="PurM_cligase"/>
</dbReference>
<dbReference type="NCBIfam" id="TIGR00878">
    <property type="entry name" value="purM"/>
    <property type="match status" value="1"/>
</dbReference>
<dbReference type="PANTHER" id="PTHR10520:SF12">
    <property type="entry name" value="TRIFUNCTIONAL PURINE BIOSYNTHETIC PROTEIN ADENOSINE-3"/>
    <property type="match status" value="1"/>
</dbReference>
<dbReference type="PANTHER" id="PTHR10520">
    <property type="entry name" value="TRIFUNCTIONAL PURINE BIOSYNTHETIC PROTEIN ADENOSINE-3-RELATED"/>
    <property type="match status" value="1"/>
</dbReference>
<dbReference type="Pfam" id="PF00586">
    <property type="entry name" value="AIRS"/>
    <property type="match status" value="1"/>
</dbReference>
<dbReference type="Pfam" id="PF02769">
    <property type="entry name" value="AIRS_C"/>
    <property type="match status" value="1"/>
</dbReference>
<dbReference type="SUPFAM" id="SSF56042">
    <property type="entry name" value="PurM C-terminal domain-like"/>
    <property type="match status" value="1"/>
</dbReference>
<dbReference type="SUPFAM" id="SSF55326">
    <property type="entry name" value="PurM N-terminal domain-like"/>
    <property type="match status" value="1"/>
</dbReference>
<sequence length="355" mass="36731">MDKKNGLTYAEAGVDIDAGNALVETIKPFVRATRRAGADAELGGFGGLFDLKAAGFQDPILVAANDGVGSKVKLAIETGQHDTIGVDLVAMCVNDLIVQGAEPLFFLDYYATGKLEPATAASVVKGIADGCREAGCALIGGETAEMPGLYTGKDYDLAGFAVGAVERGHLLPRTDIAAGDLLLGLPSSGLHSNGFSLVRRVLADNGASLDGPAPYEPGKTLGESLLTPTRIYVRPLLHVFAATQAVKALAHITGGGFQENLPRVLPAGFGLALDLSALAVPPVFGWLAREGGIAETEMLRTFNCGIGMVLIVANDEASKVEEALRAAGEQPIRLGSVIPAPETGPRVTFQGQLSL</sequence>
<evidence type="ECO:0000255" key="1">
    <source>
        <dbReference type="HAMAP-Rule" id="MF_00741"/>
    </source>
</evidence>
<accession>B2IJR2</accession>
<comment type="catalytic activity">
    <reaction evidence="1">
        <text>2-formamido-N(1)-(5-O-phospho-beta-D-ribosyl)acetamidine + ATP = 5-amino-1-(5-phospho-beta-D-ribosyl)imidazole + ADP + phosphate + H(+)</text>
        <dbReference type="Rhea" id="RHEA:23032"/>
        <dbReference type="ChEBI" id="CHEBI:15378"/>
        <dbReference type="ChEBI" id="CHEBI:30616"/>
        <dbReference type="ChEBI" id="CHEBI:43474"/>
        <dbReference type="ChEBI" id="CHEBI:137981"/>
        <dbReference type="ChEBI" id="CHEBI:147287"/>
        <dbReference type="ChEBI" id="CHEBI:456216"/>
        <dbReference type="EC" id="6.3.3.1"/>
    </reaction>
</comment>
<comment type="pathway">
    <text evidence="1">Purine metabolism; IMP biosynthesis via de novo pathway; 5-amino-1-(5-phospho-D-ribosyl)imidazole from N(2)-formyl-N(1)-(5-phospho-D-ribosyl)glycinamide: step 2/2.</text>
</comment>
<comment type="subcellular location">
    <subcellularLocation>
        <location evidence="1">Cytoplasm</location>
    </subcellularLocation>
</comment>
<comment type="similarity">
    <text evidence="1">Belongs to the AIR synthase family.</text>
</comment>
<feature type="chain" id="PRO_1000192997" description="Phosphoribosylformylglycinamidine cyclo-ligase">
    <location>
        <begin position="1"/>
        <end position="355"/>
    </location>
</feature>
<name>PUR5_BEII9</name>
<protein>
    <recommendedName>
        <fullName evidence="1">Phosphoribosylformylglycinamidine cyclo-ligase</fullName>
        <ecNumber evidence="1">6.3.3.1</ecNumber>
    </recommendedName>
    <alternativeName>
        <fullName evidence="1">AIR synthase</fullName>
    </alternativeName>
    <alternativeName>
        <fullName evidence="1">AIRS</fullName>
    </alternativeName>
    <alternativeName>
        <fullName evidence="1">Phosphoribosyl-aminoimidazole synthetase</fullName>
    </alternativeName>
</protein>
<organism>
    <name type="scientific">Beijerinckia indica subsp. indica (strain ATCC 9039 / DSM 1715 / NCIMB 8712)</name>
    <dbReference type="NCBI Taxonomy" id="395963"/>
    <lineage>
        <taxon>Bacteria</taxon>
        <taxon>Pseudomonadati</taxon>
        <taxon>Pseudomonadota</taxon>
        <taxon>Alphaproteobacteria</taxon>
        <taxon>Hyphomicrobiales</taxon>
        <taxon>Beijerinckiaceae</taxon>
        <taxon>Beijerinckia</taxon>
    </lineage>
</organism>
<keyword id="KW-0067">ATP-binding</keyword>
<keyword id="KW-0963">Cytoplasm</keyword>
<keyword id="KW-0436">Ligase</keyword>
<keyword id="KW-0547">Nucleotide-binding</keyword>
<keyword id="KW-0658">Purine biosynthesis</keyword>
<keyword id="KW-1185">Reference proteome</keyword>
<reference key="1">
    <citation type="journal article" date="2010" name="J. Bacteriol.">
        <title>Complete genome sequence of Beijerinckia indica subsp. indica.</title>
        <authorList>
            <person name="Tamas I."/>
            <person name="Dedysh S.N."/>
            <person name="Liesack W."/>
            <person name="Stott M.B."/>
            <person name="Alam M."/>
            <person name="Murrell J.C."/>
            <person name="Dunfield P.F."/>
        </authorList>
    </citation>
    <scope>NUCLEOTIDE SEQUENCE [LARGE SCALE GENOMIC DNA]</scope>
    <source>
        <strain>ATCC 9039 / DSM 1715 / NCIMB 8712</strain>
    </source>
</reference>